<evidence type="ECO:0000250" key="1">
    <source>
        <dbReference type="UniProtKB" id="C0LGT6"/>
    </source>
</evidence>
<evidence type="ECO:0000250" key="2">
    <source>
        <dbReference type="UniProtKB" id="O22476"/>
    </source>
</evidence>
<evidence type="ECO:0000250" key="3">
    <source>
        <dbReference type="UniProtKB" id="Q9M0G7"/>
    </source>
</evidence>
<evidence type="ECO:0000255" key="4"/>
<evidence type="ECO:0000255" key="5">
    <source>
        <dbReference type="PROSITE-ProRule" id="PRU00159"/>
    </source>
</evidence>
<evidence type="ECO:0000255" key="6">
    <source>
        <dbReference type="PROSITE-ProRule" id="PRU10027"/>
    </source>
</evidence>
<evidence type="ECO:0000256" key="7">
    <source>
        <dbReference type="SAM" id="MobiDB-lite"/>
    </source>
</evidence>
<evidence type="ECO:0000269" key="8">
    <source>
    </source>
</evidence>
<evidence type="ECO:0000269" key="9">
    <source>
    </source>
</evidence>
<evidence type="ECO:0000269" key="10">
    <source>
    </source>
</evidence>
<evidence type="ECO:0000305" key="11"/>
<accession>Q6XAT2</accession>
<accession>Q9LYP7</accession>
<dbReference type="EC" id="2.7.11.1"/>
<dbReference type="EMBL" id="AY244746">
    <property type="protein sequence ID" value="AAP69764.1"/>
    <property type="molecule type" value="mRNA"/>
</dbReference>
<dbReference type="EMBL" id="AL163652">
    <property type="protein sequence ID" value="CAB87274.1"/>
    <property type="status" value="ALT_SEQ"/>
    <property type="molecule type" value="Genomic_DNA"/>
</dbReference>
<dbReference type="EMBL" id="CP002688">
    <property type="protein sequence ID" value="AED91118.1"/>
    <property type="molecule type" value="Genomic_DNA"/>
</dbReference>
<dbReference type="EMBL" id="FJ708772">
    <property type="protein sequence ID" value="ACN59363.1"/>
    <property type="molecule type" value="mRNA"/>
</dbReference>
<dbReference type="PIR" id="T48489">
    <property type="entry name" value="T48489"/>
</dbReference>
<dbReference type="RefSeq" id="NP_196335.2">
    <property type="nucleotide sequence ID" value="NM_120800.4"/>
</dbReference>
<dbReference type="PDB" id="5XKN">
    <property type="method" value="X-ray"/>
    <property type="resolution" value="3.65 A"/>
    <property type="chains" value="A/B=30-575"/>
</dbReference>
<dbReference type="PDBsum" id="5XKN"/>
<dbReference type="SMR" id="Q6XAT2"/>
<dbReference type="BioGRID" id="15888">
    <property type="interactions" value="28"/>
</dbReference>
<dbReference type="FunCoup" id="Q6XAT2">
    <property type="interactions" value="270"/>
</dbReference>
<dbReference type="IntAct" id="Q6XAT2">
    <property type="interactions" value="56"/>
</dbReference>
<dbReference type="STRING" id="3702.Q6XAT2"/>
<dbReference type="GlyCosmos" id="Q6XAT2">
    <property type="glycosylation" value="14 sites, No reported glycans"/>
</dbReference>
<dbReference type="GlyGen" id="Q6XAT2">
    <property type="glycosylation" value="14 sites"/>
</dbReference>
<dbReference type="PaxDb" id="3702-AT5G07180.1"/>
<dbReference type="ProteomicsDB" id="220694"/>
<dbReference type="EnsemblPlants" id="AT5G07180.1">
    <property type="protein sequence ID" value="AT5G07180.1"/>
    <property type="gene ID" value="AT5G07180"/>
</dbReference>
<dbReference type="GeneID" id="830609"/>
<dbReference type="Gramene" id="AT5G07180.1">
    <property type="protein sequence ID" value="AT5G07180.1"/>
    <property type="gene ID" value="AT5G07180"/>
</dbReference>
<dbReference type="KEGG" id="ath:AT5G07180"/>
<dbReference type="Araport" id="AT5G07180"/>
<dbReference type="TAIR" id="AT5G07180">
    <property type="gene designation" value="ERL2"/>
</dbReference>
<dbReference type="eggNOG" id="ENOG502QTEP">
    <property type="taxonomic scope" value="Eukaryota"/>
</dbReference>
<dbReference type="HOGENOM" id="CLU_000288_22_1_1"/>
<dbReference type="InParanoid" id="Q6XAT2"/>
<dbReference type="PhylomeDB" id="Q6XAT2"/>
<dbReference type="PRO" id="PR:Q6XAT2"/>
<dbReference type="Proteomes" id="UP000006548">
    <property type="component" value="Chromosome 5"/>
</dbReference>
<dbReference type="ExpressionAtlas" id="Q6XAT2">
    <property type="expression patterns" value="baseline and differential"/>
</dbReference>
<dbReference type="GO" id="GO:0016020">
    <property type="term" value="C:membrane"/>
    <property type="evidence" value="ECO:0007669"/>
    <property type="project" value="UniProtKB-SubCell"/>
</dbReference>
<dbReference type="GO" id="GO:0005524">
    <property type="term" value="F:ATP binding"/>
    <property type="evidence" value="ECO:0007669"/>
    <property type="project" value="UniProtKB-KW"/>
</dbReference>
<dbReference type="GO" id="GO:0042802">
    <property type="term" value="F:identical protein binding"/>
    <property type="evidence" value="ECO:0000353"/>
    <property type="project" value="IntAct"/>
</dbReference>
<dbReference type="GO" id="GO:0106310">
    <property type="term" value="F:protein serine kinase activity"/>
    <property type="evidence" value="ECO:0007669"/>
    <property type="project" value="RHEA"/>
</dbReference>
<dbReference type="GO" id="GO:0004674">
    <property type="term" value="F:protein serine/threonine kinase activity"/>
    <property type="evidence" value="ECO:0007669"/>
    <property type="project" value="UniProtKB-KW"/>
</dbReference>
<dbReference type="GO" id="GO:0009553">
    <property type="term" value="P:embryo sac development"/>
    <property type="evidence" value="ECO:0000316"/>
    <property type="project" value="TAIR"/>
</dbReference>
<dbReference type="GO" id="GO:0048481">
    <property type="term" value="P:plant ovule development"/>
    <property type="evidence" value="ECO:0000316"/>
    <property type="project" value="TAIR"/>
</dbReference>
<dbReference type="GO" id="GO:0010103">
    <property type="term" value="P:stomatal complex morphogenesis"/>
    <property type="evidence" value="ECO:0000316"/>
    <property type="project" value="TAIR"/>
</dbReference>
<dbReference type="FunFam" id="1.10.510.10:FF:000290">
    <property type="entry name" value="LRR receptor-like serine/threonine-protein kinase ERECTA"/>
    <property type="match status" value="1"/>
</dbReference>
<dbReference type="FunFam" id="3.30.200.20:FF:000288">
    <property type="entry name" value="LRR receptor-like serine/threonine-protein kinase ERECTA"/>
    <property type="match status" value="1"/>
</dbReference>
<dbReference type="FunFam" id="3.80.10.10:FF:000077">
    <property type="entry name" value="LRR receptor-like serine/threonine-protein kinase ERL1"/>
    <property type="match status" value="1"/>
</dbReference>
<dbReference type="FunFam" id="3.80.10.10:FF:000107">
    <property type="entry name" value="LRR receptor-like serine/threonine-protein kinase ERL1"/>
    <property type="match status" value="1"/>
</dbReference>
<dbReference type="FunFam" id="3.80.10.10:FF:000219">
    <property type="entry name" value="LRR receptor-like serine/threonine-protein kinase ERL1"/>
    <property type="match status" value="1"/>
</dbReference>
<dbReference type="Gene3D" id="3.30.200.20">
    <property type="entry name" value="Phosphorylase Kinase, domain 1"/>
    <property type="match status" value="1"/>
</dbReference>
<dbReference type="Gene3D" id="3.80.10.10">
    <property type="entry name" value="Ribonuclease Inhibitor"/>
    <property type="match status" value="3"/>
</dbReference>
<dbReference type="Gene3D" id="1.10.510.10">
    <property type="entry name" value="Transferase(Phosphotransferase) domain 1"/>
    <property type="match status" value="1"/>
</dbReference>
<dbReference type="InterPro" id="IPR011009">
    <property type="entry name" value="Kinase-like_dom_sf"/>
</dbReference>
<dbReference type="InterPro" id="IPR001611">
    <property type="entry name" value="Leu-rich_rpt"/>
</dbReference>
<dbReference type="InterPro" id="IPR003591">
    <property type="entry name" value="Leu-rich_rpt_typical-subtyp"/>
</dbReference>
<dbReference type="InterPro" id="IPR032675">
    <property type="entry name" value="LRR_dom_sf"/>
</dbReference>
<dbReference type="InterPro" id="IPR013210">
    <property type="entry name" value="LRR_N_plant-typ"/>
</dbReference>
<dbReference type="InterPro" id="IPR050647">
    <property type="entry name" value="Plant_LRR-RLKs"/>
</dbReference>
<dbReference type="InterPro" id="IPR000719">
    <property type="entry name" value="Prot_kinase_dom"/>
</dbReference>
<dbReference type="InterPro" id="IPR017441">
    <property type="entry name" value="Protein_kinase_ATP_BS"/>
</dbReference>
<dbReference type="InterPro" id="IPR008271">
    <property type="entry name" value="Ser/Thr_kinase_AS"/>
</dbReference>
<dbReference type="PANTHER" id="PTHR48056">
    <property type="entry name" value="LRR RECEPTOR-LIKE SERINE/THREONINE-PROTEIN KINASE-RELATED"/>
    <property type="match status" value="1"/>
</dbReference>
<dbReference type="PANTHER" id="PTHR48056:SF87">
    <property type="entry name" value="LRR RECEPTOR-LIKE SERINE_THREONINE-PROTEIN KINASE ERL2"/>
    <property type="match status" value="1"/>
</dbReference>
<dbReference type="Pfam" id="PF00560">
    <property type="entry name" value="LRR_1"/>
    <property type="match status" value="12"/>
</dbReference>
<dbReference type="Pfam" id="PF08263">
    <property type="entry name" value="LRRNT_2"/>
    <property type="match status" value="1"/>
</dbReference>
<dbReference type="Pfam" id="PF00069">
    <property type="entry name" value="Pkinase"/>
    <property type="match status" value="1"/>
</dbReference>
<dbReference type="SMART" id="SM00369">
    <property type="entry name" value="LRR_TYP"/>
    <property type="match status" value="9"/>
</dbReference>
<dbReference type="SMART" id="SM00220">
    <property type="entry name" value="S_TKc"/>
    <property type="match status" value="1"/>
</dbReference>
<dbReference type="SUPFAM" id="SSF52058">
    <property type="entry name" value="L domain-like"/>
    <property type="match status" value="2"/>
</dbReference>
<dbReference type="SUPFAM" id="SSF56112">
    <property type="entry name" value="Protein kinase-like (PK-like)"/>
    <property type="match status" value="1"/>
</dbReference>
<dbReference type="PROSITE" id="PS51450">
    <property type="entry name" value="LRR"/>
    <property type="match status" value="14"/>
</dbReference>
<dbReference type="PROSITE" id="PS00107">
    <property type="entry name" value="PROTEIN_KINASE_ATP"/>
    <property type="match status" value="1"/>
</dbReference>
<dbReference type="PROSITE" id="PS50011">
    <property type="entry name" value="PROTEIN_KINASE_DOM"/>
    <property type="match status" value="1"/>
</dbReference>
<dbReference type="PROSITE" id="PS00108">
    <property type="entry name" value="PROTEIN_KINASE_ST"/>
    <property type="match status" value="1"/>
</dbReference>
<sequence length="967" mass="106680">MRRIETMKGLFFCLGMVVFMLLGSVSPMNNEGKALMAIKASFSNVANMLLDWDDVHNHDFCSWRGVFCDNVSLNVVSLNLSNLNLGGEISSALGDLMNLQSIDLQGNKLGGQIPDEIGNCVSLAYVDFSTNLLFGDIPFSISKLKQLEFLNLKNNQLTGPIPATLTQIPNLKTLDLARNQLTGEIPRLLYWNEVLQYLGLRGNMLTGTLSPDMCQLTGLWYFDVRGNNLTGTIPESIGNCTSFEILDVSYNQITGVIPYNIGFLQVATLSLQGNKLTGRIPEVIGLMQALAVLDLSDNELTGPIPPILGNLSFTGKLYLHGNKLTGQIPPELGNMSRLSYLQLNDNELVGKIPPELGKLEQLFELNLANNNLVGLIPSNISSCAALNQFNVHGNFLSGAVPLEFRNLGSLTYLNLSSNSFKGKIPAELGHIINLDTLDLSGNNFSGSIPLTLGDLEHLLILNLSRNHLNGTLPAEFGNLRSIQIIDVSFNFLAGVIPTELGQLQNINSLILNNNKIHGKIPDQLTNCFSLANLNISFNNLSGIIPPMKNFTRFSPASFFGNPFLCGNWVGSICGPSLPKSQVFTRVAVICMVLGFITLICMIFIAVYKSKQQKPVLKGSSKQPEGSTKLVILHMDMAIHTFDDIMRVTENLDEKYIIGYGASSTVYKCTSKTSRPIAIKRIYNQYPSNFREFETELETIGSIRHRNIVSLHGYALSPFGNLLFYDYMENGSLWDLLHGPGKKVKLDWETRLKIAVGAAQGLAYLHHDCTPRIIHRDIKSSNILLDGNFEARLSDFGIAKSIPATKTYASTYVLGTIGYIDPEYARTSRLNEKSDIYSFGIVLLELLTGKKAVDNEANLHQMILSKADDNTVMEAVDAEVSVTCMDSGHIKKTFQLALLCTKRNPLERPTMQEVSRVLLSLVPSPPPKKLPSPAKVQEGEERRESHSSDTTTPQWFVQFREDISKSSL</sequence>
<name>ERL2_ARATH</name>
<organism>
    <name type="scientific">Arabidopsis thaliana</name>
    <name type="common">Mouse-ear cress</name>
    <dbReference type="NCBI Taxonomy" id="3702"/>
    <lineage>
        <taxon>Eukaryota</taxon>
        <taxon>Viridiplantae</taxon>
        <taxon>Streptophyta</taxon>
        <taxon>Embryophyta</taxon>
        <taxon>Tracheophyta</taxon>
        <taxon>Spermatophyta</taxon>
        <taxon>Magnoliopsida</taxon>
        <taxon>eudicotyledons</taxon>
        <taxon>Gunneridae</taxon>
        <taxon>Pentapetalae</taxon>
        <taxon>rosids</taxon>
        <taxon>malvids</taxon>
        <taxon>Brassicales</taxon>
        <taxon>Brassicaceae</taxon>
        <taxon>Camelineae</taxon>
        <taxon>Arabidopsis</taxon>
    </lineage>
</organism>
<gene>
    <name type="primary">ERL2</name>
    <name type="ordered locus">At5g07180</name>
    <name type="ORF">T28J14.120</name>
</gene>
<protein>
    <recommendedName>
        <fullName>LRR receptor-like serine/threonine-protein kinase ERL2</fullName>
        <ecNumber>2.7.11.1</ecNumber>
    </recommendedName>
    <alternativeName>
        <fullName>Protein ERECTA-like kinase 2</fullName>
    </alternativeName>
</protein>
<reference key="1">
    <citation type="journal article" date="2004" name="Development">
        <title>Synergistic interaction of three ERECTA-family receptor-like kinases controls Arabidopsis organ growth and flower development by promoting cell proliferation.</title>
        <authorList>
            <person name="Shpak E.D."/>
            <person name="Berthiaume C.T."/>
            <person name="Hill E.J."/>
            <person name="Torii K.U."/>
        </authorList>
    </citation>
    <scope>NUCLEOTIDE SEQUENCE [MRNA]</scope>
    <scope>FUNCTION</scope>
    <scope>DEVELOPMENTAL STAGE</scope>
    <scope>TISSUE SPECIFICITY</scope>
    <source>
        <strain>cv. Columbia</strain>
    </source>
</reference>
<reference key="2">
    <citation type="journal article" date="2000" name="Nature">
        <title>Sequence and analysis of chromosome 5 of the plant Arabidopsis thaliana.</title>
        <authorList>
            <person name="Tabata S."/>
            <person name="Kaneko T."/>
            <person name="Nakamura Y."/>
            <person name="Kotani H."/>
            <person name="Kato T."/>
            <person name="Asamizu E."/>
            <person name="Miyajima N."/>
            <person name="Sasamoto S."/>
            <person name="Kimura T."/>
            <person name="Hosouchi T."/>
            <person name="Kawashima K."/>
            <person name="Kohara M."/>
            <person name="Matsumoto M."/>
            <person name="Matsuno A."/>
            <person name="Muraki A."/>
            <person name="Nakayama S."/>
            <person name="Nakazaki N."/>
            <person name="Naruo K."/>
            <person name="Okumura S."/>
            <person name="Shinpo S."/>
            <person name="Takeuchi C."/>
            <person name="Wada T."/>
            <person name="Watanabe A."/>
            <person name="Yamada M."/>
            <person name="Yasuda M."/>
            <person name="Sato S."/>
            <person name="de la Bastide M."/>
            <person name="Huang E."/>
            <person name="Spiegel L."/>
            <person name="Gnoj L."/>
            <person name="O'Shaughnessy A."/>
            <person name="Preston R."/>
            <person name="Habermann K."/>
            <person name="Murray J."/>
            <person name="Johnson D."/>
            <person name="Rohlfing T."/>
            <person name="Nelson J."/>
            <person name="Stoneking T."/>
            <person name="Pepin K."/>
            <person name="Spieth J."/>
            <person name="Sekhon M."/>
            <person name="Armstrong J."/>
            <person name="Becker M."/>
            <person name="Belter E."/>
            <person name="Cordum H."/>
            <person name="Cordes M."/>
            <person name="Courtney L."/>
            <person name="Courtney W."/>
            <person name="Dante M."/>
            <person name="Du H."/>
            <person name="Edwards J."/>
            <person name="Fryman J."/>
            <person name="Haakensen B."/>
            <person name="Lamar E."/>
            <person name="Latreille P."/>
            <person name="Leonard S."/>
            <person name="Meyer R."/>
            <person name="Mulvaney E."/>
            <person name="Ozersky P."/>
            <person name="Riley A."/>
            <person name="Strowmatt C."/>
            <person name="Wagner-McPherson C."/>
            <person name="Wollam A."/>
            <person name="Yoakum M."/>
            <person name="Bell M."/>
            <person name="Dedhia N."/>
            <person name="Parnell L."/>
            <person name="Shah R."/>
            <person name="Rodriguez M."/>
            <person name="Hoon See L."/>
            <person name="Vil D."/>
            <person name="Baker J."/>
            <person name="Kirchoff K."/>
            <person name="Toth K."/>
            <person name="King L."/>
            <person name="Bahret A."/>
            <person name="Miller B."/>
            <person name="Marra M.A."/>
            <person name="Martienssen R."/>
            <person name="McCombie W.R."/>
            <person name="Wilson R.K."/>
            <person name="Murphy G."/>
            <person name="Bancroft I."/>
            <person name="Volckaert G."/>
            <person name="Wambutt R."/>
            <person name="Duesterhoeft A."/>
            <person name="Stiekema W."/>
            <person name="Pohl T."/>
            <person name="Entian K.-D."/>
            <person name="Terryn N."/>
            <person name="Hartley N."/>
            <person name="Bent E."/>
            <person name="Johnson S."/>
            <person name="Langham S.-A."/>
            <person name="McCullagh B."/>
            <person name="Robben J."/>
            <person name="Grymonprez B."/>
            <person name="Zimmermann W."/>
            <person name="Ramsperger U."/>
            <person name="Wedler H."/>
            <person name="Balke K."/>
            <person name="Wedler E."/>
            <person name="Peters S."/>
            <person name="van Staveren M."/>
            <person name="Dirkse W."/>
            <person name="Mooijman P."/>
            <person name="Klein Lankhorst R."/>
            <person name="Weitzenegger T."/>
            <person name="Bothe G."/>
            <person name="Rose M."/>
            <person name="Hauf J."/>
            <person name="Berneiser S."/>
            <person name="Hempel S."/>
            <person name="Feldpausch M."/>
            <person name="Lamberth S."/>
            <person name="Villarroel R."/>
            <person name="Gielen J."/>
            <person name="Ardiles W."/>
            <person name="Bents O."/>
            <person name="Lemcke K."/>
            <person name="Kolesov G."/>
            <person name="Mayer K.F.X."/>
            <person name="Rudd S."/>
            <person name="Schoof H."/>
            <person name="Schueller C."/>
            <person name="Zaccaria P."/>
            <person name="Mewes H.-W."/>
            <person name="Bevan M."/>
            <person name="Fransz P.F."/>
        </authorList>
    </citation>
    <scope>NUCLEOTIDE SEQUENCE [LARGE SCALE GENOMIC DNA]</scope>
    <source>
        <strain>cv. Columbia</strain>
    </source>
</reference>
<reference key="3">
    <citation type="journal article" date="2017" name="Plant J.">
        <title>Araport11: a complete reannotation of the Arabidopsis thaliana reference genome.</title>
        <authorList>
            <person name="Cheng C.Y."/>
            <person name="Krishnakumar V."/>
            <person name="Chan A.P."/>
            <person name="Thibaud-Nissen F."/>
            <person name="Schobel S."/>
            <person name="Town C.D."/>
        </authorList>
    </citation>
    <scope>GENOME REANNOTATION</scope>
    <source>
        <strain>cv. Columbia</strain>
    </source>
</reference>
<reference key="4">
    <citation type="journal article" date="2010" name="BMC Genomics">
        <title>Genome-wide cloning and sequence analysis of leucine-rich repeat receptor-like protein kinase genes in Arabidopsis thaliana.</title>
        <authorList>
            <person name="Gou X."/>
            <person name="He K."/>
            <person name="Yang H."/>
            <person name="Yuan T."/>
            <person name="Lin H."/>
            <person name="Clouse S.D."/>
            <person name="Li J."/>
        </authorList>
    </citation>
    <scope>NUCLEOTIDE SEQUENCE [LARGE SCALE MRNA]</scope>
    <source>
        <strain>cv. Columbia</strain>
    </source>
</reference>
<reference key="5">
    <citation type="journal article" date="2005" name="Science">
        <title>Stomatal patterning and differentiation by synergistic interactions of receptor kinases.</title>
        <authorList>
            <person name="Shpak E.D."/>
            <person name="McAbee J.M."/>
            <person name="Pillitteri L.J."/>
            <person name="Torii K.U."/>
        </authorList>
    </citation>
    <scope>FUNCTION</scope>
</reference>
<reference key="6">
    <citation type="journal article" date="2007" name="Development">
        <title>Haploinsufficiency after successive loss of signaling reveals a role for ERECTA-family genes in Arabidopsis ovule development.</title>
        <authorList>
            <person name="Pillitteri L.J."/>
            <person name="Bemis S.M."/>
            <person name="Shpak E.D."/>
            <person name="Torii K.U."/>
        </authorList>
    </citation>
    <scope>FUNCTION</scope>
</reference>
<proteinExistence type="evidence at protein level"/>
<comment type="function">
    <text evidence="8 9 10">Receptor kinase that regulates inflorescence architecture and organ shape as well as stomatal patterning, including density and clustering, together with ERL1 and ER.</text>
</comment>
<comment type="catalytic activity">
    <reaction>
        <text>L-seryl-[protein] + ATP = O-phospho-L-seryl-[protein] + ADP + H(+)</text>
        <dbReference type="Rhea" id="RHEA:17989"/>
        <dbReference type="Rhea" id="RHEA-COMP:9863"/>
        <dbReference type="Rhea" id="RHEA-COMP:11604"/>
        <dbReference type="ChEBI" id="CHEBI:15378"/>
        <dbReference type="ChEBI" id="CHEBI:29999"/>
        <dbReference type="ChEBI" id="CHEBI:30616"/>
        <dbReference type="ChEBI" id="CHEBI:83421"/>
        <dbReference type="ChEBI" id="CHEBI:456216"/>
        <dbReference type="EC" id="2.7.11.1"/>
    </reaction>
</comment>
<comment type="catalytic activity">
    <reaction>
        <text>L-threonyl-[protein] + ATP = O-phospho-L-threonyl-[protein] + ADP + H(+)</text>
        <dbReference type="Rhea" id="RHEA:46608"/>
        <dbReference type="Rhea" id="RHEA-COMP:11060"/>
        <dbReference type="Rhea" id="RHEA-COMP:11605"/>
        <dbReference type="ChEBI" id="CHEBI:15378"/>
        <dbReference type="ChEBI" id="CHEBI:30013"/>
        <dbReference type="ChEBI" id="CHEBI:30616"/>
        <dbReference type="ChEBI" id="CHEBI:61977"/>
        <dbReference type="ChEBI" id="CHEBI:456216"/>
        <dbReference type="EC" id="2.7.11.1"/>
    </reaction>
</comment>
<comment type="interaction">
    <interactant intactId="EBI-16895926">
        <id>Q6XAT2</id>
    </interactant>
    <interactant intactId="EBI-1238687">
        <id>O04567</id>
        <label>At1g27190</label>
    </interactant>
    <organismsDiffer>false</organismsDiffer>
    <experiments>2</experiments>
</comment>
<comment type="interaction">
    <interactant intactId="EBI-16895926">
        <id>Q6XAT2</id>
    </interactant>
    <interactant intactId="EBI-20651225">
        <id>C0LGI5</id>
        <label>At1g69990</label>
    </interactant>
    <organismsDiffer>false</organismsDiffer>
    <experiments>3</experiments>
</comment>
<comment type="interaction">
    <interactant intactId="EBI-16895926">
        <id>Q6XAT2</id>
    </interactant>
    <interactant intactId="EBI-20651957">
        <id>Q9ZQR3</id>
        <label>At2g14510</label>
    </interactant>
    <organismsDiffer>false</organismsDiffer>
    <experiments>2</experiments>
</comment>
<comment type="interaction">
    <interactant intactId="EBI-16895926">
        <id>Q6XAT2</id>
    </interactant>
    <interactant intactId="EBI-16902452">
        <id>Q8VYT3</id>
        <label>At4g30520</label>
    </interactant>
    <organismsDiffer>false</organismsDiffer>
    <experiments>3</experiments>
</comment>
<comment type="interaction">
    <interactant intactId="EBI-16895926">
        <id>Q6XAT2</id>
    </interactant>
    <interactant intactId="EBI-6298290">
        <id>Q9ASS4</id>
        <label>At5g48380</label>
    </interactant>
    <organismsDiffer>false</organismsDiffer>
    <experiments>2</experiments>
</comment>
<comment type="interaction">
    <interactant intactId="EBI-16895926">
        <id>Q6XAT2</id>
    </interactant>
    <interactant intactId="EBI-617138">
        <id>Q94F62</id>
        <label>BAK1</label>
    </interactant>
    <organismsDiffer>false</organismsDiffer>
    <experiments>4</experiments>
</comment>
<comment type="interaction">
    <interactant intactId="EBI-16895926">
        <id>Q6XAT2</id>
    </interactant>
    <interactant intactId="EBI-1797828">
        <id>O22476</id>
        <label>BRI1</label>
    </interactant>
    <organismsDiffer>false</organismsDiffer>
    <experiments>2</experiments>
</comment>
<comment type="interaction">
    <interactant intactId="EBI-16895926">
        <id>Q6XAT2</id>
    </interactant>
    <interactant intactId="EBI-590903">
        <id>Q9ZWC8</id>
        <label>BRL1</label>
    </interactant>
    <organismsDiffer>false</organismsDiffer>
    <experiments>2</experiments>
</comment>
<comment type="interaction">
    <interactant intactId="EBI-16895926">
        <id>Q6XAT2</id>
    </interactant>
    <interactant intactId="EBI-20651413">
        <id>Q9LJF3</id>
        <label>BRL3</label>
    </interactant>
    <organismsDiffer>false</organismsDiffer>
    <experiments>2</experiments>
</comment>
<comment type="interaction">
    <interactant intactId="EBI-16895926">
        <id>Q6XAT2</id>
    </interactant>
    <interactant intactId="EBI-16940407">
        <id>Q42371</id>
        <label>ERECTA</label>
    </interactant>
    <organismsDiffer>false</organismsDiffer>
    <experiments>4</experiments>
</comment>
<comment type="interaction">
    <interactant intactId="EBI-16895926">
        <id>Q6XAT2</id>
    </interactant>
    <interactant intactId="EBI-16914248">
        <id>C0LGW6</id>
        <label>ERL1</label>
    </interactant>
    <organismsDiffer>false</organismsDiffer>
    <experiments>2</experiments>
</comment>
<comment type="interaction">
    <interactant intactId="EBI-16895926">
        <id>Q6XAT2</id>
    </interactant>
    <interactant intactId="EBI-16895926">
        <id>Q6XAT2</id>
        <label>ERL2</label>
    </interactant>
    <organismsDiffer>false</organismsDiffer>
    <experiments>3</experiments>
</comment>
<comment type="interaction">
    <interactant intactId="EBI-16895926">
        <id>Q6XAT2</id>
    </interactant>
    <interactant intactId="EBI-1799448">
        <id>Q9FL28</id>
        <label>FLS2</label>
    </interactant>
    <organismsDiffer>false</organismsDiffer>
    <experiments>4</experiments>
</comment>
<comment type="interaction">
    <interactant intactId="EBI-16895926">
        <id>Q6XAT2</id>
    </interactant>
    <interactant intactId="EBI-16924837">
        <id>Q9C8I6</id>
        <label>IOS1</label>
    </interactant>
    <organismsDiffer>false</organismsDiffer>
    <experiments>3</experiments>
</comment>
<comment type="interaction">
    <interactant intactId="EBI-16895926">
        <id>Q6XAT2</id>
    </interactant>
    <interactant intactId="EBI-20651739">
        <id>Q9ZVD4</id>
        <label>LRR-RLK</label>
    </interactant>
    <organismsDiffer>false</organismsDiffer>
    <experiments>2</experiments>
</comment>
<comment type="interaction">
    <interactant intactId="EBI-16895926">
        <id>Q6XAT2</id>
    </interactant>
    <interactant intactId="EBI-16146189">
        <id>Q9LFS4</id>
        <label>NIK1</label>
    </interactant>
    <organismsDiffer>false</organismsDiffer>
    <experiments>4</experiments>
</comment>
<comment type="interaction">
    <interactant intactId="EBI-16895926">
        <id>Q6XAT2</id>
    </interactant>
    <interactant intactId="EBI-20664696">
        <id>Q8RY65</id>
        <label>NIK2</label>
    </interactant>
    <organismsDiffer>false</organismsDiffer>
    <experiments>4</experiments>
</comment>
<comment type="interaction">
    <interactant intactId="EBI-16895926">
        <id>Q6XAT2</id>
    </interactant>
    <interactant intactId="EBI-16904988">
        <id>Q9C7S5</id>
        <label>PSY1R</label>
    </interactant>
    <organismsDiffer>false</organismsDiffer>
    <experiments>3</experiments>
</comment>
<comment type="interaction">
    <interactant intactId="EBI-16895926">
        <id>Q6XAT2</id>
    </interactant>
    <interactant intactId="EBI-1238953">
        <id>Q9ZRF9</id>
        <label>RPK1</label>
    </interactant>
    <organismsDiffer>false</organismsDiffer>
    <experiments>3</experiments>
</comment>
<comment type="interaction">
    <interactant intactId="EBI-16895926">
        <id>Q6XAT2</id>
    </interactant>
    <interactant intactId="EBI-1555537">
        <id>Q94AG2</id>
        <label>SERK1</label>
    </interactant>
    <organismsDiffer>false</organismsDiffer>
    <experiments>4</experiments>
</comment>
<comment type="interaction">
    <interactant intactId="EBI-16895926">
        <id>Q6XAT2</id>
    </interactant>
    <interactant intactId="EBI-6290483">
        <id>Q9SKG5</id>
        <label>SERK4</label>
    </interactant>
    <organismsDiffer>false</organismsDiffer>
    <experiments>3</experiments>
</comment>
<comment type="interaction">
    <interactant intactId="EBI-16895926">
        <id>Q6XAT2</id>
    </interactant>
    <interactant intactId="EBI-16887868">
        <id>Q8LPS5</id>
        <label>SERK5</label>
    </interactant>
    <organismsDiffer>false</organismsDiffer>
    <experiments>4</experiments>
</comment>
<comment type="interaction">
    <interactant intactId="EBI-16895926">
        <id>Q6XAT2</id>
    </interactant>
    <interactant intactId="EBI-16955764">
        <id>Q06BH3</id>
        <label>SRF1</label>
    </interactant>
    <organismsDiffer>false</organismsDiffer>
    <experiments>2</experiments>
</comment>
<comment type="interaction">
    <interactant intactId="EBI-16895926">
        <id>Q6XAT2</id>
    </interactant>
    <interactant intactId="EBI-16955365">
        <id>Q9FG24</id>
        <label>SRF2</label>
    </interactant>
    <organismsDiffer>false</organismsDiffer>
    <experiments>2</experiments>
</comment>
<comment type="interaction">
    <interactant intactId="EBI-16895926">
        <id>Q6XAT2</id>
    </interactant>
    <interactant intactId="EBI-20651925">
        <id>Q6R2K3</id>
        <label>SRF3</label>
    </interactant>
    <organismsDiffer>false</organismsDiffer>
    <experiments>2</experiments>
</comment>
<comment type="interaction">
    <interactant intactId="EBI-16895926">
        <id>Q6XAT2</id>
    </interactant>
    <interactant intactId="EBI-20651875">
        <id>Q6R2K1</id>
        <label>SRF5</label>
    </interactant>
    <organismsDiffer>false</organismsDiffer>
    <experiments>3</experiments>
</comment>
<comment type="interaction">
    <interactant intactId="EBI-16895926">
        <id>Q6XAT2</id>
    </interactant>
    <interactant intactId="EBI-16954301">
        <id>Q9C8M9</id>
        <label>SRF6</label>
    </interactant>
    <organismsDiffer>false</organismsDiffer>
    <experiments>3</experiments>
</comment>
<comment type="interaction">
    <interactant intactId="EBI-16895926">
        <id>Q6XAT2</id>
    </interactant>
    <interactant intactId="EBI-16964596">
        <id>Q9LUL4</id>
        <label>SRF7</label>
    </interactant>
    <organismsDiffer>false</organismsDiffer>
    <experiments>3</experiments>
</comment>
<comment type="interaction">
    <interactant intactId="EBI-16895926">
        <id>Q6XAT2</id>
    </interactant>
    <interactant intactId="EBI-17072125">
        <id>Q8RWZ1</id>
        <label>SUB</label>
    </interactant>
    <organismsDiffer>false</organismsDiffer>
    <experiments>4</experiments>
</comment>
<comment type="subcellular location">
    <subcellularLocation>
        <location evidence="11">Membrane</location>
        <topology evidence="11">Single-pass type I membrane protein</topology>
    </subcellularLocation>
</comment>
<comment type="tissue specificity">
    <text evidence="8">Mostly expressed in developing organs, including bud clusters, flowers, siliques and young rosettes. Also detected in mature aboveground organs, such as leaves, stems and pedicels, but barely in roots.</text>
</comment>
<comment type="developmental stage">
    <text evidence="8">At the vegetative stage, strongly expressed in the shoot meristem, leaf primordia and juvenile leaves. At the reproductive stage, localized in the young developing flowers.</text>
</comment>
<comment type="similarity">
    <text evidence="5">Belongs to the protein kinase superfamily. Ser/Thr protein kinase family.</text>
</comment>
<comment type="sequence caution" evidence="11">
    <conflict type="erroneous gene model prediction">
        <sequence resource="EMBL-CDS" id="CAB87274"/>
    </conflict>
</comment>
<feature type="signal peptide" evidence="4">
    <location>
        <begin position="1"/>
        <end position="27"/>
    </location>
</feature>
<feature type="chain" id="PRO_0000387510" description="LRR receptor-like serine/threonine-protein kinase ERL2">
    <location>
        <begin position="28"/>
        <end position="967"/>
    </location>
</feature>
<feature type="topological domain" description="Extracellular" evidence="4">
    <location>
        <begin position="28"/>
        <end position="585"/>
    </location>
</feature>
<feature type="transmembrane region" description="Helical" evidence="4">
    <location>
        <begin position="586"/>
        <end position="606"/>
    </location>
</feature>
<feature type="topological domain" description="Cytoplasmic" evidence="4">
    <location>
        <begin position="607"/>
        <end position="967"/>
    </location>
</feature>
<feature type="repeat" description="LRR 1">
    <location>
        <begin position="74"/>
        <end position="97"/>
    </location>
</feature>
<feature type="repeat" description="LRR 2">
    <location>
        <begin position="98"/>
        <end position="120"/>
    </location>
</feature>
<feature type="repeat" description="LRR 3">
    <location>
        <begin position="122"/>
        <end position="145"/>
    </location>
</feature>
<feature type="repeat" description="LRR 4">
    <location>
        <begin position="146"/>
        <end position="166"/>
    </location>
</feature>
<feature type="repeat" description="LRR 5">
    <location>
        <begin position="170"/>
        <end position="192"/>
    </location>
</feature>
<feature type="repeat" description="LRR 6">
    <location>
        <begin position="194"/>
        <end position="216"/>
    </location>
</feature>
<feature type="repeat" description="LRR 7">
    <location>
        <begin position="218"/>
        <end position="240"/>
    </location>
</feature>
<feature type="repeat" description="LRR 8">
    <location>
        <begin position="242"/>
        <end position="261"/>
    </location>
</feature>
<feature type="repeat" description="LRR 9">
    <location>
        <begin position="265"/>
        <end position="287"/>
    </location>
</feature>
<feature type="repeat" description="LRR 10">
    <location>
        <begin position="289"/>
        <end position="311"/>
    </location>
</feature>
<feature type="repeat" description="LRR 11">
    <location>
        <begin position="313"/>
        <end position="335"/>
    </location>
</feature>
<feature type="repeat" description="LRR 12">
    <location>
        <begin position="337"/>
        <end position="359"/>
    </location>
</feature>
<feature type="repeat" description="LRR 13">
    <location>
        <begin position="361"/>
        <end position="382"/>
    </location>
</feature>
<feature type="repeat" description="LRR 14">
    <location>
        <begin position="385"/>
        <end position="406"/>
    </location>
</feature>
<feature type="repeat" description="LRR 15">
    <location>
        <begin position="409"/>
        <end position="431"/>
    </location>
</feature>
<feature type="repeat" description="LRR 16">
    <location>
        <begin position="433"/>
        <end position="456"/>
    </location>
</feature>
<feature type="repeat" description="LRR 17">
    <location>
        <begin position="457"/>
        <end position="479"/>
    </location>
</feature>
<feature type="repeat" description="LRR 18">
    <location>
        <begin position="481"/>
        <end position="503"/>
    </location>
</feature>
<feature type="repeat" description="LRR 19">
    <location>
        <begin position="505"/>
        <end position="527"/>
    </location>
</feature>
<feature type="repeat" description="LRR 20">
    <location>
        <begin position="529"/>
        <end position="550"/>
    </location>
</feature>
<feature type="domain" description="Protein kinase" evidence="5">
    <location>
        <begin position="651"/>
        <end position="921"/>
    </location>
</feature>
<feature type="region of interest" description="Disordered" evidence="7">
    <location>
        <begin position="921"/>
        <end position="955"/>
    </location>
</feature>
<feature type="compositionally biased region" description="Basic and acidic residues" evidence="7">
    <location>
        <begin position="936"/>
        <end position="946"/>
    </location>
</feature>
<feature type="active site" description="Proton acceptor" evidence="5 6">
    <location>
        <position position="776"/>
    </location>
</feature>
<feature type="binding site" evidence="5">
    <location>
        <begin position="657"/>
        <end position="665"/>
    </location>
    <ligand>
        <name>ATP</name>
        <dbReference type="ChEBI" id="CHEBI:30616"/>
    </ligand>
</feature>
<feature type="binding site" evidence="5">
    <location>
        <position position="679"/>
    </location>
    <ligand>
        <name>ATP</name>
        <dbReference type="ChEBI" id="CHEBI:30616"/>
    </ligand>
</feature>
<feature type="modified residue" description="Phosphothreonine" evidence="2">
    <location>
        <position position="640"/>
    </location>
</feature>
<feature type="modified residue" description="Phosphothreonine" evidence="2">
    <location>
        <position position="648"/>
    </location>
</feature>
<feature type="modified residue" description="Phosphotyrosine" evidence="2">
    <location>
        <position position="724"/>
    </location>
</feature>
<feature type="modified residue" description="Phosphotyrosine" evidence="1">
    <location>
        <position position="763"/>
    </location>
</feature>
<feature type="modified residue" description="Phosphotyrosine" evidence="1">
    <location>
        <position position="818"/>
    </location>
</feature>
<feature type="modified residue" description="Phosphothreonine" evidence="3">
    <location>
        <position position="826"/>
    </location>
</feature>
<feature type="glycosylation site" description="N-linked (GlcNAc...) asparagine" evidence="4">
    <location>
        <position position="70"/>
    </location>
</feature>
<feature type="glycosylation site" description="N-linked (GlcNAc...) asparagine" evidence="4">
    <location>
        <position position="79"/>
    </location>
</feature>
<feature type="glycosylation site" description="N-linked (GlcNAc...) asparagine" evidence="4">
    <location>
        <position position="228"/>
    </location>
</feature>
<feature type="glycosylation site" description="N-linked (GlcNAc...) asparagine" evidence="4">
    <location>
        <position position="239"/>
    </location>
</feature>
<feature type="glycosylation site" description="N-linked (GlcNAc...) asparagine" evidence="4">
    <location>
        <position position="310"/>
    </location>
</feature>
<feature type="glycosylation site" description="N-linked (GlcNAc...) asparagine" evidence="4">
    <location>
        <position position="334"/>
    </location>
</feature>
<feature type="glycosylation site" description="N-linked (GlcNAc...) asparagine" evidence="4">
    <location>
        <position position="379"/>
    </location>
</feature>
<feature type="glycosylation site" description="N-linked (GlcNAc...) asparagine" evidence="4">
    <location>
        <position position="414"/>
    </location>
</feature>
<feature type="glycosylation site" description="N-linked (GlcNAc...) asparagine" evidence="4">
    <location>
        <position position="443"/>
    </location>
</feature>
<feature type="glycosylation site" description="N-linked (GlcNAc...) asparagine" evidence="4">
    <location>
        <position position="462"/>
    </location>
</feature>
<feature type="glycosylation site" description="N-linked (GlcNAc...) asparagine" evidence="4">
    <location>
        <position position="469"/>
    </location>
</feature>
<feature type="glycosylation site" description="N-linked (GlcNAc...) asparagine" evidence="4">
    <location>
        <position position="534"/>
    </location>
</feature>
<feature type="glycosylation site" description="N-linked (GlcNAc...) asparagine" evidence="4">
    <location>
        <position position="539"/>
    </location>
</feature>
<feature type="glycosylation site" description="N-linked (GlcNAc...) asparagine" evidence="4">
    <location>
        <position position="549"/>
    </location>
</feature>
<keyword id="KW-0002">3D-structure</keyword>
<keyword id="KW-0067">ATP-binding</keyword>
<keyword id="KW-0325">Glycoprotein</keyword>
<keyword id="KW-0418">Kinase</keyword>
<keyword id="KW-0433">Leucine-rich repeat</keyword>
<keyword id="KW-0472">Membrane</keyword>
<keyword id="KW-0547">Nucleotide-binding</keyword>
<keyword id="KW-0597">Phosphoprotein</keyword>
<keyword id="KW-0675">Receptor</keyword>
<keyword id="KW-1185">Reference proteome</keyword>
<keyword id="KW-0677">Repeat</keyword>
<keyword id="KW-0723">Serine/threonine-protein kinase</keyword>
<keyword id="KW-0732">Signal</keyword>
<keyword id="KW-0808">Transferase</keyword>
<keyword id="KW-0812">Transmembrane</keyword>
<keyword id="KW-1133">Transmembrane helix</keyword>